<name>ATPB1_BURP0</name>
<dbReference type="EC" id="7.1.2.2" evidence="1"/>
<dbReference type="EMBL" id="CP000572">
    <property type="protein sequence ID" value="ABN92297.1"/>
    <property type="molecule type" value="Genomic_DNA"/>
</dbReference>
<dbReference type="SMR" id="A3P0Z0"/>
<dbReference type="KEGG" id="bpl:BURPS1106A_4042"/>
<dbReference type="HOGENOM" id="CLU_022398_0_2_4"/>
<dbReference type="Proteomes" id="UP000006738">
    <property type="component" value="Chromosome I"/>
</dbReference>
<dbReference type="GO" id="GO:0005886">
    <property type="term" value="C:plasma membrane"/>
    <property type="evidence" value="ECO:0007669"/>
    <property type="project" value="UniProtKB-SubCell"/>
</dbReference>
<dbReference type="GO" id="GO:0045259">
    <property type="term" value="C:proton-transporting ATP synthase complex"/>
    <property type="evidence" value="ECO:0007669"/>
    <property type="project" value="UniProtKB-KW"/>
</dbReference>
<dbReference type="GO" id="GO:0005524">
    <property type="term" value="F:ATP binding"/>
    <property type="evidence" value="ECO:0007669"/>
    <property type="project" value="UniProtKB-UniRule"/>
</dbReference>
<dbReference type="GO" id="GO:0016887">
    <property type="term" value="F:ATP hydrolysis activity"/>
    <property type="evidence" value="ECO:0007669"/>
    <property type="project" value="InterPro"/>
</dbReference>
<dbReference type="GO" id="GO:0046933">
    <property type="term" value="F:proton-transporting ATP synthase activity, rotational mechanism"/>
    <property type="evidence" value="ECO:0007669"/>
    <property type="project" value="UniProtKB-UniRule"/>
</dbReference>
<dbReference type="CDD" id="cd18110">
    <property type="entry name" value="ATP-synt_F1_beta_C"/>
    <property type="match status" value="1"/>
</dbReference>
<dbReference type="CDD" id="cd18115">
    <property type="entry name" value="ATP-synt_F1_beta_N"/>
    <property type="match status" value="1"/>
</dbReference>
<dbReference type="CDD" id="cd01133">
    <property type="entry name" value="F1-ATPase_beta_CD"/>
    <property type="match status" value="1"/>
</dbReference>
<dbReference type="FunFam" id="1.10.1140.10:FF:000001">
    <property type="entry name" value="ATP synthase subunit beta"/>
    <property type="match status" value="1"/>
</dbReference>
<dbReference type="FunFam" id="3.40.50.300:FF:000004">
    <property type="entry name" value="ATP synthase subunit beta"/>
    <property type="match status" value="1"/>
</dbReference>
<dbReference type="Gene3D" id="2.40.10.170">
    <property type="match status" value="1"/>
</dbReference>
<dbReference type="Gene3D" id="1.10.1140.10">
    <property type="entry name" value="Bovine Mitochondrial F1-atpase, Atp Synthase Beta Chain, Chain D, domain 3"/>
    <property type="match status" value="1"/>
</dbReference>
<dbReference type="Gene3D" id="3.40.50.300">
    <property type="entry name" value="P-loop containing nucleotide triphosphate hydrolases"/>
    <property type="match status" value="1"/>
</dbReference>
<dbReference type="HAMAP" id="MF_01347">
    <property type="entry name" value="ATP_synth_beta_bact"/>
    <property type="match status" value="1"/>
</dbReference>
<dbReference type="InterPro" id="IPR003593">
    <property type="entry name" value="AAA+_ATPase"/>
</dbReference>
<dbReference type="InterPro" id="IPR055190">
    <property type="entry name" value="ATP-synt_VA_C"/>
</dbReference>
<dbReference type="InterPro" id="IPR005722">
    <property type="entry name" value="ATP_synth_F1_bsu"/>
</dbReference>
<dbReference type="InterPro" id="IPR020003">
    <property type="entry name" value="ATPase_a/bsu_AS"/>
</dbReference>
<dbReference type="InterPro" id="IPR050053">
    <property type="entry name" value="ATPase_alpha/beta_chains"/>
</dbReference>
<dbReference type="InterPro" id="IPR004100">
    <property type="entry name" value="ATPase_F1/V1/A1_a/bsu_N"/>
</dbReference>
<dbReference type="InterPro" id="IPR036121">
    <property type="entry name" value="ATPase_F1/V1/A1_a/bsu_N_sf"/>
</dbReference>
<dbReference type="InterPro" id="IPR000194">
    <property type="entry name" value="ATPase_F1/V1/A1_a/bsu_nucl-bd"/>
</dbReference>
<dbReference type="InterPro" id="IPR024034">
    <property type="entry name" value="ATPase_F1/V1_b/a_C"/>
</dbReference>
<dbReference type="InterPro" id="IPR027417">
    <property type="entry name" value="P-loop_NTPase"/>
</dbReference>
<dbReference type="NCBIfam" id="TIGR01039">
    <property type="entry name" value="atpD"/>
    <property type="match status" value="1"/>
</dbReference>
<dbReference type="PANTHER" id="PTHR15184">
    <property type="entry name" value="ATP SYNTHASE"/>
    <property type="match status" value="1"/>
</dbReference>
<dbReference type="PANTHER" id="PTHR15184:SF71">
    <property type="entry name" value="ATP SYNTHASE SUBUNIT BETA, MITOCHONDRIAL"/>
    <property type="match status" value="1"/>
</dbReference>
<dbReference type="Pfam" id="PF00006">
    <property type="entry name" value="ATP-synt_ab"/>
    <property type="match status" value="1"/>
</dbReference>
<dbReference type="Pfam" id="PF02874">
    <property type="entry name" value="ATP-synt_ab_N"/>
    <property type="match status" value="1"/>
</dbReference>
<dbReference type="Pfam" id="PF22919">
    <property type="entry name" value="ATP-synt_VA_C"/>
    <property type="match status" value="1"/>
</dbReference>
<dbReference type="SMART" id="SM00382">
    <property type="entry name" value="AAA"/>
    <property type="match status" value="1"/>
</dbReference>
<dbReference type="SUPFAM" id="SSF47917">
    <property type="entry name" value="C-terminal domain of alpha and beta subunits of F1 ATP synthase"/>
    <property type="match status" value="1"/>
</dbReference>
<dbReference type="SUPFAM" id="SSF50615">
    <property type="entry name" value="N-terminal domain of alpha and beta subunits of F1 ATP synthase"/>
    <property type="match status" value="1"/>
</dbReference>
<dbReference type="SUPFAM" id="SSF52540">
    <property type="entry name" value="P-loop containing nucleoside triphosphate hydrolases"/>
    <property type="match status" value="1"/>
</dbReference>
<dbReference type="PROSITE" id="PS00152">
    <property type="entry name" value="ATPASE_ALPHA_BETA"/>
    <property type="match status" value="1"/>
</dbReference>
<feature type="chain" id="PRO_0000339493" description="ATP synthase subunit beta 1">
    <location>
        <begin position="1"/>
        <end position="464"/>
    </location>
</feature>
<feature type="binding site" evidence="1">
    <location>
        <begin position="153"/>
        <end position="160"/>
    </location>
    <ligand>
        <name>ATP</name>
        <dbReference type="ChEBI" id="CHEBI:30616"/>
    </ligand>
</feature>
<sequence>MSTAALVEGKIVQCIGAVIDVEFPRESMPKIYDALILEGSELTLEVQQQLGDGVVRTICLGASDGLRRGVVVKNTGNPISVPVGKPTLGRIMDVLGRPIDEAGPIESENKRSIHQKAPAFDELSPSTELLETGIKVIDLICPFAKGGKVGLFGGAGVGKTVNMMELINNIAKEHGGYSVFAGVGERTREGNDFYHEMKDSNVLDKVALVYGQMNEPPGNRLRVALTGLTMAEHFRDEGLDVLFFVDNIYRFTLAGTEVSALLGRMPSAVGYQPTLAEEMGKLQERITSTKKGSITSVQAVYVPADDLTDPSPATTFGHLDATVVLSRDIASLGIYPAVDPLDSTSRQIDPNVIGEEHYSITRRVQQTLQRYKELRDIIAILGMDELSPEDKLSVARARKIQRFLSQPFHVAEVFTGSPGKYVPLKETIRGFKMIVDGECDHLPEQAFYMVGTIDEAFEKAKKIQ</sequence>
<evidence type="ECO:0000255" key="1">
    <source>
        <dbReference type="HAMAP-Rule" id="MF_01347"/>
    </source>
</evidence>
<proteinExistence type="inferred from homology"/>
<reference key="1">
    <citation type="journal article" date="2010" name="Genome Biol. Evol.">
        <title>Continuing evolution of Burkholderia mallei through genome reduction and large-scale rearrangements.</title>
        <authorList>
            <person name="Losada L."/>
            <person name="Ronning C.M."/>
            <person name="DeShazer D."/>
            <person name="Woods D."/>
            <person name="Fedorova N."/>
            <person name="Kim H.S."/>
            <person name="Shabalina S.A."/>
            <person name="Pearson T.R."/>
            <person name="Brinkac L."/>
            <person name="Tan P."/>
            <person name="Nandi T."/>
            <person name="Crabtree J."/>
            <person name="Badger J."/>
            <person name="Beckstrom-Sternberg S."/>
            <person name="Saqib M."/>
            <person name="Schutzer S.E."/>
            <person name="Keim P."/>
            <person name="Nierman W.C."/>
        </authorList>
    </citation>
    <scope>NUCLEOTIDE SEQUENCE [LARGE SCALE GENOMIC DNA]</scope>
    <source>
        <strain>1106a</strain>
    </source>
</reference>
<keyword id="KW-0066">ATP synthesis</keyword>
<keyword id="KW-0067">ATP-binding</keyword>
<keyword id="KW-0997">Cell inner membrane</keyword>
<keyword id="KW-1003">Cell membrane</keyword>
<keyword id="KW-0139">CF(1)</keyword>
<keyword id="KW-0375">Hydrogen ion transport</keyword>
<keyword id="KW-0406">Ion transport</keyword>
<keyword id="KW-0472">Membrane</keyword>
<keyword id="KW-0547">Nucleotide-binding</keyword>
<keyword id="KW-1278">Translocase</keyword>
<keyword id="KW-0813">Transport</keyword>
<protein>
    <recommendedName>
        <fullName evidence="1">ATP synthase subunit beta 1</fullName>
        <ecNumber evidence="1">7.1.2.2</ecNumber>
    </recommendedName>
    <alternativeName>
        <fullName evidence="1">ATP synthase F1 sector subunit beta 1</fullName>
    </alternativeName>
    <alternativeName>
        <fullName evidence="1">F-ATPase subunit beta 1</fullName>
    </alternativeName>
</protein>
<organism>
    <name type="scientific">Burkholderia pseudomallei (strain 1106a)</name>
    <dbReference type="NCBI Taxonomy" id="357348"/>
    <lineage>
        <taxon>Bacteria</taxon>
        <taxon>Pseudomonadati</taxon>
        <taxon>Pseudomonadota</taxon>
        <taxon>Betaproteobacteria</taxon>
        <taxon>Burkholderiales</taxon>
        <taxon>Burkholderiaceae</taxon>
        <taxon>Burkholderia</taxon>
        <taxon>pseudomallei group</taxon>
    </lineage>
</organism>
<accession>A3P0Z0</accession>
<comment type="function">
    <text evidence="1">Produces ATP from ADP in the presence of a proton gradient across the membrane. The catalytic sites are hosted primarily by the beta subunits.</text>
</comment>
<comment type="catalytic activity">
    <reaction evidence="1">
        <text>ATP + H2O + 4 H(+)(in) = ADP + phosphate + 5 H(+)(out)</text>
        <dbReference type="Rhea" id="RHEA:57720"/>
        <dbReference type="ChEBI" id="CHEBI:15377"/>
        <dbReference type="ChEBI" id="CHEBI:15378"/>
        <dbReference type="ChEBI" id="CHEBI:30616"/>
        <dbReference type="ChEBI" id="CHEBI:43474"/>
        <dbReference type="ChEBI" id="CHEBI:456216"/>
        <dbReference type="EC" id="7.1.2.2"/>
    </reaction>
</comment>
<comment type="subunit">
    <text evidence="1">F-type ATPases have 2 components, CF(1) - the catalytic core - and CF(0) - the membrane proton channel. CF(1) has five subunits: alpha(3), beta(3), gamma(1), delta(1), epsilon(1). CF(0) has three main subunits: a(1), b(2) and c(9-12). The alpha and beta chains form an alternating ring which encloses part of the gamma chain. CF(1) is attached to CF(0) by a central stalk formed by the gamma and epsilon chains, while a peripheral stalk is formed by the delta and b chains.</text>
</comment>
<comment type="subcellular location">
    <subcellularLocation>
        <location evidence="1">Cell inner membrane</location>
        <topology evidence="1">Peripheral membrane protein</topology>
    </subcellularLocation>
</comment>
<comment type="similarity">
    <text evidence="1">Belongs to the ATPase alpha/beta chains family.</text>
</comment>
<gene>
    <name evidence="1" type="primary">atpD1</name>
    <name type="ordered locus">BURPS1106A_4042</name>
</gene>